<organism>
    <name type="scientific">Listeria welshimeri serovar 6b (strain ATCC 35897 / DSM 20650 / CCUG 15529 / CIP 8149 / NCTC 11857 / SLCC 5334 / V8)</name>
    <dbReference type="NCBI Taxonomy" id="386043"/>
    <lineage>
        <taxon>Bacteria</taxon>
        <taxon>Bacillati</taxon>
        <taxon>Bacillota</taxon>
        <taxon>Bacilli</taxon>
        <taxon>Bacillales</taxon>
        <taxon>Listeriaceae</taxon>
        <taxon>Listeria</taxon>
    </lineage>
</organism>
<dbReference type="EC" id="6.1.1.6" evidence="1"/>
<dbReference type="EMBL" id="AM263198">
    <property type="protein sequence ID" value="CAK19610.1"/>
    <property type="molecule type" value="Genomic_DNA"/>
</dbReference>
<dbReference type="RefSeq" id="WP_011701056.1">
    <property type="nucleotide sequence ID" value="NC_008555.1"/>
</dbReference>
<dbReference type="SMR" id="A0AF28"/>
<dbReference type="STRING" id="386043.lwe0192"/>
<dbReference type="GeneID" id="61188070"/>
<dbReference type="KEGG" id="lwe:lwe0192"/>
<dbReference type="eggNOG" id="COG1190">
    <property type="taxonomic scope" value="Bacteria"/>
</dbReference>
<dbReference type="HOGENOM" id="CLU_008255_6_0_9"/>
<dbReference type="OrthoDB" id="9801152at2"/>
<dbReference type="Proteomes" id="UP000000779">
    <property type="component" value="Chromosome"/>
</dbReference>
<dbReference type="GO" id="GO:0005829">
    <property type="term" value="C:cytosol"/>
    <property type="evidence" value="ECO:0007669"/>
    <property type="project" value="TreeGrafter"/>
</dbReference>
<dbReference type="GO" id="GO:0005524">
    <property type="term" value="F:ATP binding"/>
    <property type="evidence" value="ECO:0007669"/>
    <property type="project" value="UniProtKB-UniRule"/>
</dbReference>
<dbReference type="GO" id="GO:0140096">
    <property type="term" value="F:catalytic activity, acting on a protein"/>
    <property type="evidence" value="ECO:0007669"/>
    <property type="project" value="UniProtKB-ARBA"/>
</dbReference>
<dbReference type="GO" id="GO:0004824">
    <property type="term" value="F:lysine-tRNA ligase activity"/>
    <property type="evidence" value="ECO:0007669"/>
    <property type="project" value="UniProtKB-UniRule"/>
</dbReference>
<dbReference type="GO" id="GO:0000287">
    <property type="term" value="F:magnesium ion binding"/>
    <property type="evidence" value="ECO:0007669"/>
    <property type="project" value="UniProtKB-UniRule"/>
</dbReference>
<dbReference type="GO" id="GO:0016740">
    <property type="term" value="F:transferase activity"/>
    <property type="evidence" value="ECO:0007669"/>
    <property type="project" value="UniProtKB-ARBA"/>
</dbReference>
<dbReference type="GO" id="GO:0000049">
    <property type="term" value="F:tRNA binding"/>
    <property type="evidence" value="ECO:0007669"/>
    <property type="project" value="TreeGrafter"/>
</dbReference>
<dbReference type="GO" id="GO:0006430">
    <property type="term" value="P:lysyl-tRNA aminoacylation"/>
    <property type="evidence" value="ECO:0007669"/>
    <property type="project" value="UniProtKB-UniRule"/>
</dbReference>
<dbReference type="CDD" id="cd00775">
    <property type="entry name" value="LysRS_core"/>
    <property type="match status" value="1"/>
</dbReference>
<dbReference type="CDD" id="cd04322">
    <property type="entry name" value="LysRS_N"/>
    <property type="match status" value="1"/>
</dbReference>
<dbReference type="FunFam" id="2.40.50.140:FF:000024">
    <property type="entry name" value="Lysine--tRNA ligase"/>
    <property type="match status" value="1"/>
</dbReference>
<dbReference type="FunFam" id="3.30.930.10:FF:000001">
    <property type="entry name" value="Lysine--tRNA ligase"/>
    <property type="match status" value="1"/>
</dbReference>
<dbReference type="Gene3D" id="3.30.930.10">
    <property type="entry name" value="Bira Bifunctional Protein, Domain 2"/>
    <property type="match status" value="1"/>
</dbReference>
<dbReference type="Gene3D" id="2.40.50.140">
    <property type="entry name" value="Nucleic acid-binding proteins"/>
    <property type="match status" value="1"/>
</dbReference>
<dbReference type="HAMAP" id="MF_00252">
    <property type="entry name" value="Lys_tRNA_synth_class2"/>
    <property type="match status" value="1"/>
</dbReference>
<dbReference type="InterPro" id="IPR004364">
    <property type="entry name" value="Aa-tRNA-synt_II"/>
</dbReference>
<dbReference type="InterPro" id="IPR006195">
    <property type="entry name" value="aa-tRNA-synth_II"/>
</dbReference>
<dbReference type="InterPro" id="IPR045864">
    <property type="entry name" value="aa-tRNA-synth_II/BPL/LPL"/>
</dbReference>
<dbReference type="InterPro" id="IPR002313">
    <property type="entry name" value="Lys-tRNA-ligase_II"/>
</dbReference>
<dbReference type="InterPro" id="IPR034762">
    <property type="entry name" value="Lys-tRNA-ligase_II_bac/euk"/>
</dbReference>
<dbReference type="InterPro" id="IPR044136">
    <property type="entry name" value="Lys-tRNA-ligase_II_N"/>
</dbReference>
<dbReference type="InterPro" id="IPR018149">
    <property type="entry name" value="Lys-tRNA-synth_II_C"/>
</dbReference>
<dbReference type="InterPro" id="IPR012340">
    <property type="entry name" value="NA-bd_OB-fold"/>
</dbReference>
<dbReference type="InterPro" id="IPR004365">
    <property type="entry name" value="NA-bd_OB_tRNA"/>
</dbReference>
<dbReference type="NCBIfam" id="TIGR00499">
    <property type="entry name" value="lysS_bact"/>
    <property type="match status" value="1"/>
</dbReference>
<dbReference type="NCBIfam" id="NF001756">
    <property type="entry name" value="PRK00484.1"/>
    <property type="match status" value="1"/>
</dbReference>
<dbReference type="PANTHER" id="PTHR42918:SF15">
    <property type="entry name" value="LYSINE--TRNA LIGASE, CHLOROPLASTIC_MITOCHONDRIAL"/>
    <property type="match status" value="1"/>
</dbReference>
<dbReference type="PANTHER" id="PTHR42918">
    <property type="entry name" value="LYSYL-TRNA SYNTHETASE"/>
    <property type="match status" value="1"/>
</dbReference>
<dbReference type="Pfam" id="PF00152">
    <property type="entry name" value="tRNA-synt_2"/>
    <property type="match status" value="1"/>
</dbReference>
<dbReference type="Pfam" id="PF01336">
    <property type="entry name" value="tRNA_anti-codon"/>
    <property type="match status" value="1"/>
</dbReference>
<dbReference type="PIRSF" id="PIRSF039101">
    <property type="entry name" value="LysRS2"/>
    <property type="match status" value="1"/>
</dbReference>
<dbReference type="PRINTS" id="PR00982">
    <property type="entry name" value="TRNASYNTHLYS"/>
</dbReference>
<dbReference type="SUPFAM" id="SSF55681">
    <property type="entry name" value="Class II aaRS and biotin synthetases"/>
    <property type="match status" value="1"/>
</dbReference>
<dbReference type="SUPFAM" id="SSF50249">
    <property type="entry name" value="Nucleic acid-binding proteins"/>
    <property type="match status" value="1"/>
</dbReference>
<dbReference type="PROSITE" id="PS50862">
    <property type="entry name" value="AA_TRNA_LIGASE_II"/>
    <property type="match status" value="1"/>
</dbReference>
<accession>A0AF28</accession>
<sequence length="498" mass="57399">MSNENHEELNDQLIVRREKVDTLREEGIDPFGEKFIRSISPEEIETKFADKSKEELEEAAIEVSVAGRIMTKRVKGKVGFTHIQDRFHQLQIYIRKDAIGEDAYAIFKLADLGDIIGIKGTIFRTNTGELSVKATDFTLLSKSLRPLPDKYHGLKDVEQRYRQRYLDLITNEESQNRFVMRSKILKYTRDYMDSQGFLEVETPVLHTIAGGAAAKPFITHHNALDMELYLRIALELHLKRLIVGGMDKVYEIGRVFRNEGTSTRHNPEFTMLESYAAYEDYEDVMDLVEGLVSTVCKQVNGTTEITYGEYKVDLTPNWRRVHMADVVKEYVGVDFWNVTSDEEARELAKKHDVAITEHMTYGHILNEFFETYVEEKLIQPTFVYGHPVEISPLAKKNKEDERFTDRFELFIVGREHANAFSELNDPIDQRERFEAQMKEREQGNDEAHGMDADFLEALEYGLPPTGGLGIGVDRLVMLLTDAPSIRDILLFPTMKHRD</sequence>
<name>SYK_LISW6</name>
<feature type="chain" id="PRO_1000012889" description="Lysine--tRNA ligase">
    <location>
        <begin position="1"/>
        <end position="498"/>
    </location>
</feature>
<feature type="binding site" evidence="1">
    <location>
        <position position="408"/>
    </location>
    <ligand>
        <name>Mg(2+)</name>
        <dbReference type="ChEBI" id="CHEBI:18420"/>
        <label>1</label>
    </ligand>
</feature>
<feature type="binding site" evidence="1">
    <location>
        <position position="415"/>
    </location>
    <ligand>
        <name>Mg(2+)</name>
        <dbReference type="ChEBI" id="CHEBI:18420"/>
        <label>1</label>
    </ligand>
</feature>
<feature type="binding site" evidence="1">
    <location>
        <position position="415"/>
    </location>
    <ligand>
        <name>Mg(2+)</name>
        <dbReference type="ChEBI" id="CHEBI:18420"/>
        <label>2</label>
    </ligand>
</feature>
<comment type="catalytic activity">
    <reaction evidence="1">
        <text>tRNA(Lys) + L-lysine + ATP = L-lysyl-tRNA(Lys) + AMP + diphosphate</text>
        <dbReference type="Rhea" id="RHEA:20792"/>
        <dbReference type="Rhea" id="RHEA-COMP:9696"/>
        <dbReference type="Rhea" id="RHEA-COMP:9697"/>
        <dbReference type="ChEBI" id="CHEBI:30616"/>
        <dbReference type="ChEBI" id="CHEBI:32551"/>
        <dbReference type="ChEBI" id="CHEBI:33019"/>
        <dbReference type="ChEBI" id="CHEBI:78442"/>
        <dbReference type="ChEBI" id="CHEBI:78529"/>
        <dbReference type="ChEBI" id="CHEBI:456215"/>
        <dbReference type="EC" id="6.1.1.6"/>
    </reaction>
</comment>
<comment type="cofactor">
    <cofactor evidence="1">
        <name>Mg(2+)</name>
        <dbReference type="ChEBI" id="CHEBI:18420"/>
    </cofactor>
    <text evidence="1">Binds 3 Mg(2+) ions per subunit.</text>
</comment>
<comment type="subunit">
    <text evidence="1">Homodimer.</text>
</comment>
<comment type="subcellular location">
    <subcellularLocation>
        <location evidence="1">Cytoplasm</location>
    </subcellularLocation>
</comment>
<comment type="similarity">
    <text evidence="1">Belongs to the class-II aminoacyl-tRNA synthetase family.</text>
</comment>
<gene>
    <name evidence="1" type="primary">lysS</name>
    <name type="ordered locus">lwe0192</name>
</gene>
<reference key="1">
    <citation type="journal article" date="2006" name="J. Bacteriol.">
        <title>Whole-genome sequence of Listeria welshimeri reveals common steps in genome reduction with Listeria innocua as compared to Listeria monocytogenes.</title>
        <authorList>
            <person name="Hain T."/>
            <person name="Steinweg C."/>
            <person name="Kuenne C.T."/>
            <person name="Billion A."/>
            <person name="Ghai R."/>
            <person name="Chatterjee S.S."/>
            <person name="Domann E."/>
            <person name="Kaerst U."/>
            <person name="Goesmann A."/>
            <person name="Bekel T."/>
            <person name="Bartels D."/>
            <person name="Kaiser O."/>
            <person name="Meyer F."/>
            <person name="Puehler A."/>
            <person name="Weisshaar B."/>
            <person name="Wehland J."/>
            <person name="Liang C."/>
            <person name="Dandekar T."/>
            <person name="Lampidis R."/>
            <person name="Kreft J."/>
            <person name="Goebel W."/>
            <person name="Chakraborty T."/>
        </authorList>
    </citation>
    <scope>NUCLEOTIDE SEQUENCE [LARGE SCALE GENOMIC DNA]</scope>
    <source>
        <strain>ATCC 35897 / DSM 20650 / CCUG 15529 / CIP 8149 / NCTC 11857 / SLCC 5334 / V8</strain>
    </source>
</reference>
<proteinExistence type="inferred from homology"/>
<evidence type="ECO:0000255" key="1">
    <source>
        <dbReference type="HAMAP-Rule" id="MF_00252"/>
    </source>
</evidence>
<protein>
    <recommendedName>
        <fullName evidence="1">Lysine--tRNA ligase</fullName>
        <ecNumber evidence="1">6.1.1.6</ecNumber>
    </recommendedName>
    <alternativeName>
        <fullName evidence="1">Lysyl-tRNA synthetase</fullName>
        <shortName evidence="1">LysRS</shortName>
    </alternativeName>
</protein>
<keyword id="KW-0030">Aminoacyl-tRNA synthetase</keyword>
<keyword id="KW-0067">ATP-binding</keyword>
<keyword id="KW-0963">Cytoplasm</keyword>
<keyword id="KW-0436">Ligase</keyword>
<keyword id="KW-0460">Magnesium</keyword>
<keyword id="KW-0479">Metal-binding</keyword>
<keyword id="KW-0547">Nucleotide-binding</keyword>
<keyword id="KW-0648">Protein biosynthesis</keyword>